<organism>
    <name type="scientific">Bacillus cereus (strain G9842)</name>
    <dbReference type="NCBI Taxonomy" id="405531"/>
    <lineage>
        <taxon>Bacteria</taxon>
        <taxon>Bacillati</taxon>
        <taxon>Bacillota</taxon>
        <taxon>Bacilli</taxon>
        <taxon>Bacillales</taxon>
        <taxon>Bacillaceae</taxon>
        <taxon>Bacillus</taxon>
        <taxon>Bacillus cereus group</taxon>
    </lineage>
</organism>
<feature type="chain" id="PRO_1000121945" description="Chromosomal replication initiator protein DnaA">
    <location>
        <begin position="1"/>
        <end position="446"/>
    </location>
</feature>
<feature type="region of interest" description="Domain I, interacts with DnaA modulators" evidence="1">
    <location>
        <begin position="1"/>
        <end position="81"/>
    </location>
</feature>
<feature type="region of interest" description="Domain II" evidence="1">
    <location>
        <begin position="81"/>
        <end position="109"/>
    </location>
</feature>
<feature type="region of interest" description="Domain III, AAA+ region" evidence="1">
    <location>
        <begin position="110"/>
        <end position="326"/>
    </location>
</feature>
<feature type="region of interest" description="Domain IV, binds dsDNA" evidence="1">
    <location>
        <begin position="327"/>
        <end position="446"/>
    </location>
</feature>
<feature type="binding site" evidence="1">
    <location>
        <position position="154"/>
    </location>
    <ligand>
        <name>ATP</name>
        <dbReference type="ChEBI" id="CHEBI:30616"/>
    </ligand>
</feature>
<feature type="binding site" evidence="1">
    <location>
        <position position="156"/>
    </location>
    <ligand>
        <name>ATP</name>
        <dbReference type="ChEBI" id="CHEBI:30616"/>
    </ligand>
</feature>
<feature type="binding site" evidence="1">
    <location>
        <position position="157"/>
    </location>
    <ligand>
        <name>ATP</name>
        <dbReference type="ChEBI" id="CHEBI:30616"/>
    </ligand>
</feature>
<feature type="binding site" evidence="1">
    <location>
        <position position="158"/>
    </location>
    <ligand>
        <name>ATP</name>
        <dbReference type="ChEBI" id="CHEBI:30616"/>
    </ligand>
</feature>
<evidence type="ECO:0000255" key="1">
    <source>
        <dbReference type="HAMAP-Rule" id="MF_00377"/>
    </source>
</evidence>
<proteinExistence type="inferred from homology"/>
<gene>
    <name evidence="1" type="primary">dnaA</name>
    <name type="ordered locus">BCG9842_B5319</name>
</gene>
<name>DNAA_BACC2</name>
<accession>B7IS20</accession>
<protein>
    <recommendedName>
        <fullName evidence="1">Chromosomal replication initiator protein DnaA</fullName>
    </recommendedName>
</protein>
<reference key="1">
    <citation type="submission" date="2008-10" db="EMBL/GenBank/DDBJ databases">
        <title>Genome sequence of Bacillus cereus G9842.</title>
        <authorList>
            <person name="Dodson R.J."/>
            <person name="Durkin A.S."/>
            <person name="Rosovitz M.J."/>
            <person name="Rasko D.A."/>
            <person name="Hoffmaster A."/>
            <person name="Ravel J."/>
            <person name="Sutton G."/>
        </authorList>
    </citation>
    <scope>NUCLEOTIDE SEQUENCE [LARGE SCALE GENOMIC DNA]</scope>
    <source>
        <strain>G9842</strain>
    </source>
</reference>
<sequence>MENISDLWNSALKELEKKVSKPSYETWLKSTTAHNLKKDVLTITAPNEFARDWLESHYSELISETLYDLTGAKLAIRFIIPQSQAEEDIDLPPVKRNPAQDDSAHLPQSMLNPKYTFDTFVIGSGNRFAHAASLAVAEAPAKAYNPLFIYGGVGLGKTHLMHAIGHYVIEHNPNAKVVYLSSEKFTNEFINSIRDNKAVDFRNKYRNVDVLLIDDIQFLAGKEQTQEEFFHTFNALHEESKQIVISSDRPPKEIPTLEDRLRSRFEWGLITDITPPDLETRIAILRKKAKAEGLDIPNEVMLYIANQIDSNIRELEGALIRVVAYSSLINKDINADLAAEALKDIIPNSKPKIISIYDIQKAVGDVYQVKLEDFKAKKRTKSVAFPRQIAMYLSRELTDSSLPKIGEEFGGRDHTTVIHAHEKISKLLKTDTQLQKQVEEINGILK</sequence>
<comment type="function">
    <text evidence="1">Plays an essential role in the initiation and regulation of chromosomal replication. ATP-DnaA binds to the origin of replication (oriC) to initiate formation of the DNA replication initiation complex once per cell cycle. Binds the DnaA box (a 9 base pair repeat at the origin) and separates the double-stranded (ds)DNA. Forms a right-handed helical filament on oriC DNA; dsDNA binds to the exterior of the filament while single-stranded (ss)DNA is stabiized in the filament's interior. The ATP-DnaA-oriC complex binds and stabilizes one strand of the AT-rich DNA unwinding element (DUE), permitting loading of DNA polymerase. After initiation quickly degrades to an ADP-DnaA complex that is not apt for DNA replication. Binds acidic phospholipids.</text>
</comment>
<comment type="subunit">
    <text evidence="1">Oligomerizes as a right-handed, spiral filament on DNA at oriC.</text>
</comment>
<comment type="subcellular location">
    <subcellularLocation>
        <location evidence="1">Cytoplasm</location>
    </subcellularLocation>
</comment>
<comment type="domain">
    <text evidence="1">Domain I is involved in oligomerization and binding regulators, domain II is flexibile and of varying length in different bacteria, domain III forms the AAA+ region, while domain IV binds dsDNA.</text>
</comment>
<comment type="similarity">
    <text evidence="1">Belongs to the DnaA family.</text>
</comment>
<dbReference type="EMBL" id="CP001186">
    <property type="protein sequence ID" value="ACK97578.1"/>
    <property type="molecule type" value="Genomic_DNA"/>
</dbReference>
<dbReference type="RefSeq" id="WP_000428018.1">
    <property type="nucleotide sequence ID" value="NC_011772.1"/>
</dbReference>
<dbReference type="SMR" id="B7IS20"/>
<dbReference type="KEGG" id="bcg:BCG9842_B5319"/>
<dbReference type="HOGENOM" id="CLU_026910_3_1_9"/>
<dbReference type="Proteomes" id="UP000006744">
    <property type="component" value="Chromosome"/>
</dbReference>
<dbReference type="GO" id="GO:0005737">
    <property type="term" value="C:cytoplasm"/>
    <property type="evidence" value="ECO:0007669"/>
    <property type="project" value="UniProtKB-SubCell"/>
</dbReference>
<dbReference type="GO" id="GO:0005886">
    <property type="term" value="C:plasma membrane"/>
    <property type="evidence" value="ECO:0007669"/>
    <property type="project" value="TreeGrafter"/>
</dbReference>
<dbReference type="GO" id="GO:0005524">
    <property type="term" value="F:ATP binding"/>
    <property type="evidence" value="ECO:0007669"/>
    <property type="project" value="UniProtKB-UniRule"/>
</dbReference>
<dbReference type="GO" id="GO:0016887">
    <property type="term" value="F:ATP hydrolysis activity"/>
    <property type="evidence" value="ECO:0007669"/>
    <property type="project" value="InterPro"/>
</dbReference>
<dbReference type="GO" id="GO:0003688">
    <property type="term" value="F:DNA replication origin binding"/>
    <property type="evidence" value="ECO:0007669"/>
    <property type="project" value="UniProtKB-UniRule"/>
</dbReference>
<dbReference type="GO" id="GO:0008289">
    <property type="term" value="F:lipid binding"/>
    <property type="evidence" value="ECO:0007669"/>
    <property type="project" value="UniProtKB-KW"/>
</dbReference>
<dbReference type="GO" id="GO:0006270">
    <property type="term" value="P:DNA replication initiation"/>
    <property type="evidence" value="ECO:0007669"/>
    <property type="project" value="UniProtKB-UniRule"/>
</dbReference>
<dbReference type="GO" id="GO:0006275">
    <property type="term" value="P:regulation of DNA replication"/>
    <property type="evidence" value="ECO:0007669"/>
    <property type="project" value="UniProtKB-UniRule"/>
</dbReference>
<dbReference type="CDD" id="cd00009">
    <property type="entry name" value="AAA"/>
    <property type="match status" value="1"/>
</dbReference>
<dbReference type="CDD" id="cd06571">
    <property type="entry name" value="Bac_DnaA_C"/>
    <property type="match status" value="1"/>
</dbReference>
<dbReference type="FunFam" id="1.10.1750.10:FF:000003">
    <property type="entry name" value="Chromosomal replication initiator protein DnaA"/>
    <property type="match status" value="1"/>
</dbReference>
<dbReference type="FunFam" id="1.10.8.60:FF:000003">
    <property type="entry name" value="Chromosomal replication initiator protein DnaA"/>
    <property type="match status" value="1"/>
</dbReference>
<dbReference type="FunFam" id="3.30.300.180:FF:000002">
    <property type="entry name" value="Chromosomal replication initiator protein DnaA"/>
    <property type="match status" value="1"/>
</dbReference>
<dbReference type="FunFam" id="3.40.50.300:FF:000150">
    <property type="entry name" value="Chromosomal replication initiator protein DnaA"/>
    <property type="match status" value="1"/>
</dbReference>
<dbReference type="Gene3D" id="1.10.1750.10">
    <property type="match status" value="1"/>
</dbReference>
<dbReference type="Gene3D" id="1.10.8.60">
    <property type="match status" value="1"/>
</dbReference>
<dbReference type="Gene3D" id="3.30.300.180">
    <property type="match status" value="1"/>
</dbReference>
<dbReference type="Gene3D" id="3.40.50.300">
    <property type="entry name" value="P-loop containing nucleotide triphosphate hydrolases"/>
    <property type="match status" value="1"/>
</dbReference>
<dbReference type="HAMAP" id="MF_00377">
    <property type="entry name" value="DnaA_bact"/>
    <property type="match status" value="1"/>
</dbReference>
<dbReference type="InterPro" id="IPR003593">
    <property type="entry name" value="AAA+_ATPase"/>
</dbReference>
<dbReference type="InterPro" id="IPR001957">
    <property type="entry name" value="Chromosome_initiator_DnaA"/>
</dbReference>
<dbReference type="InterPro" id="IPR020591">
    <property type="entry name" value="Chromosome_initiator_DnaA-like"/>
</dbReference>
<dbReference type="InterPro" id="IPR018312">
    <property type="entry name" value="Chromosome_initiator_DnaA_CS"/>
</dbReference>
<dbReference type="InterPro" id="IPR013159">
    <property type="entry name" value="DnaA_C"/>
</dbReference>
<dbReference type="InterPro" id="IPR013317">
    <property type="entry name" value="DnaA_dom"/>
</dbReference>
<dbReference type="InterPro" id="IPR024633">
    <property type="entry name" value="DnaA_N_dom"/>
</dbReference>
<dbReference type="InterPro" id="IPR038454">
    <property type="entry name" value="DnaA_N_sf"/>
</dbReference>
<dbReference type="InterPro" id="IPR027417">
    <property type="entry name" value="P-loop_NTPase"/>
</dbReference>
<dbReference type="InterPro" id="IPR010921">
    <property type="entry name" value="Trp_repressor/repl_initiator"/>
</dbReference>
<dbReference type="NCBIfam" id="TIGR00362">
    <property type="entry name" value="DnaA"/>
    <property type="match status" value="1"/>
</dbReference>
<dbReference type="NCBIfam" id="NF010686">
    <property type="entry name" value="PRK14086.1"/>
    <property type="match status" value="1"/>
</dbReference>
<dbReference type="PANTHER" id="PTHR30050">
    <property type="entry name" value="CHROMOSOMAL REPLICATION INITIATOR PROTEIN DNAA"/>
    <property type="match status" value="1"/>
</dbReference>
<dbReference type="PANTHER" id="PTHR30050:SF2">
    <property type="entry name" value="CHROMOSOMAL REPLICATION INITIATOR PROTEIN DNAA"/>
    <property type="match status" value="1"/>
</dbReference>
<dbReference type="Pfam" id="PF00308">
    <property type="entry name" value="Bac_DnaA"/>
    <property type="match status" value="1"/>
</dbReference>
<dbReference type="Pfam" id="PF08299">
    <property type="entry name" value="Bac_DnaA_C"/>
    <property type="match status" value="1"/>
</dbReference>
<dbReference type="Pfam" id="PF11638">
    <property type="entry name" value="DnaA_N"/>
    <property type="match status" value="1"/>
</dbReference>
<dbReference type="PRINTS" id="PR00051">
    <property type="entry name" value="DNAA"/>
</dbReference>
<dbReference type="SMART" id="SM00382">
    <property type="entry name" value="AAA"/>
    <property type="match status" value="1"/>
</dbReference>
<dbReference type="SMART" id="SM00760">
    <property type="entry name" value="Bac_DnaA_C"/>
    <property type="match status" value="1"/>
</dbReference>
<dbReference type="SUPFAM" id="SSF52540">
    <property type="entry name" value="P-loop containing nucleoside triphosphate hydrolases"/>
    <property type="match status" value="1"/>
</dbReference>
<dbReference type="SUPFAM" id="SSF48295">
    <property type="entry name" value="TrpR-like"/>
    <property type="match status" value="1"/>
</dbReference>
<dbReference type="PROSITE" id="PS01008">
    <property type="entry name" value="DNAA"/>
    <property type="match status" value="1"/>
</dbReference>
<keyword id="KW-0067">ATP-binding</keyword>
<keyword id="KW-0963">Cytoplasm</keyword>
<keyword id="KW-0235">DNA replication</keyword>
<keyword id="KW-0238">DNA-binding</keyword>
<keyword id="KW-0446">Lipid-binding</keyword>
<keyword id="KW-0547">Nucleotide-binding</keyword>